<feature type="chain" id="PRO_0000077261" description="Type I restriction enzyme EcoprrI endonuclease subunit">
    <location>
        <begin position="1"/>
        <end position="313"/>
    </location>
</feature>
<organism>
    <name type="scientific">Escherichia coli</name>
    <dbReference type="NCBI Taxonomy" id="562"/>
    <lineage>
        <taxon>Bacteria</taxon>
        <taxon>Pseudomonadati</taxon>
        <taxon>Pseudomonadota</taxon>
        <taxon>Gammaproteobacteria</taxon>
        <taxon>Enterobacterales</taxon>
        <taxon>Enterobacteriaceae</taxon>
        <taxon>Escherichia</taxon>
    </lineage>
</organism>
<proteinExistence type="inferred from homology"/>
<reference key="1">
    <citation type="journal article" date="1990" name="EMBO J.">
        <title>The optional E. coli prr locus encodes a latent form of phage T4-induced anticodon nuclease.</title>
        <authorList>
            <person name="Levitz R."/>
            <person name="Chapman D."/>
            <person name="Amitsur M."/>
            <person name="Green R."/>
            <person name="Snyder L."/>
            <person name="Kaufmann G."/>
        </authorList>
    </citation>
    <scope>NUCLEOTIDE SEQUENCE [GENOMIC DNA]</scope>
    <scope>FUNCTION</scope>
    <scope>DISRUPTION PHENOTYPE</scope>
    <source>
        <strain>CTR5X</strain>
    </source>
</reference>
<reference key="2">
    <citation type="journal article" date="2003" name="Nucleic Acids Res.">
        <title>A nomenclature for restriction enzymes, DNA methyltransferases, homing endonucleases and their genes.</title>
        <authorList>
            <person name="Roberts R.J."/>
            <person name="Belfort M."/>
            <person name="Bestor T."/>
            <person name="Bhagwat A.S."/>
            <person name="Bickle T.A."/>
            <person name="Bitinaite J."/>
            <person name="Blumenthal R.M."/>
            <person name="Degtyarev S.K."/>
            <person name="Dryden D.T."/>
            <person name="Dybvig K."/>
            <person name="Firman K."/>
            <person name="Gromova E.S."/>
            <person name="Gumport R.I."/>
            <person name="Halford S.E."/>
            <person name="Hattman S."/>
            <person name="Heitman J."/>
            <person name="Hornby D.P."/>
            <person name="Janulaitis A."/>
            <person name="Jeltsch A."/>
            <person name="Josephsen J."/>
            <person name="Kiss A."/>
            <person name="Klaenhammer T.R."/>
            <person name="Kobayashi I."/>
            <person name="Kong H."/>
            <person name="Krueger D.H."/>
            <person name="Lacks S."/>
            <person name="Marinus M.G."/>
            <person name="Miyahara M."/>
            <person name="Morgan R.D."/>
            <person name="Murray N.E."/>
            <person name="Nagaraja V."/>
            <person name="Piekarowicz A."/>
            <person name="Pingoud A."/>
            <person name="Raleigh E."/>
            <person name="Rao D.N."/>
            <person name="Reich N."/>
            <person name="Repin V.E."/>
            <person name="Selker E.U."/>
            <person name="Shaw P.C."/>
            <person name="Stein D.C."/>
            <person name="Stoddard B.L."/>
            <person name="Szybalski W."/>
            <person name="Trautner T.A."/>
            <person name="Van Etten J.L."/>
            <person name="Vitor J.M."/>
            <person name="Wilson G.G."/>
            <person name="Xu S.Y."/>
        </authorList>
    </citation>
    <scope>NOMENCLATURE</scope>
    <scope>SUBTYPE</scope>
</reference>
<dbReference type="EC" id="3.1.21.3" evidence="1"/>
<dbReference type="EMBL" id="X52284">
    <property type="protein sequence ID" value="CAA36528.1"/>
    <property type="molecule type" value="Genomic_DNA"/>
</dbReference>
<dbReference type="PIR" id="S09628">
    <property type="entry name" value="S09628"/>
</dbReference>
<dbReference type="SMR" id="P17224"/>
<dbReference type="REBASE" id="2541">
    <property type="entry name" value="EcoprrI"/>
</dbReference>
<dbReference type="GO" id="GO:0005524">
    <property type="term" value="F:ATP binding"/>
    <property type="evidence" value="ECO:0007669"/>
    <property type="project" value="UniProtKB-KW"/>
</dbReference>
<dbReference type="GO" id="GO:0003677">
    <property type="term" value="F:DNA binding"/>
    <property type="evidence" value="ECO:0007669"/>
    <property type="project" value="UniProtKB-KW"/>
</dbReference>
<dbReference type="GO" id="GO:0009035">
    <property type="term" value="F:type I site-specific deoxyribonuclease activity"/>
    <property type="evidence" value="ECO:0007669"/>
    <property type="project" value="UniProtKB-EC"/>
</dbReference>
<dbReference type="GO" id="GO:0009307">
    <property type="term" value="P:DNA restriction-modification system"/>
    <property type="evidence" value="ECO:0007669"/>
    <property type="project" value="UniProtKB-KW"/>
</dbReference>
<dbReference type="CDD" id="cd22332">
    <property type="entry name" value="HsdR_N"/>
    <property type="match status" value="1"/>
</dbReference>
<dbReference type="Gene3D" id="3.90.1570.50">
    <property type="match status" value="2"/>
</dbReference>
<dbReference type="InterPro" id="IPR007409">
    <property type="entry name" value="Restrct_endonuc_type1_HsdR_N"/>
</dbReference>
<dbReference type="InterPro" id="IPR051268">
    <property type="entry name" value="Type-I_R_enzyme_R_subunit"/>
</dbReference>
<dbReference type="PANTHER" id="PTHR30195:SF16">
    <property type="entry name" value="TYPE I RESTRICTION ENZYME ENDONUCLEASE SUBUNIT"/>
    <property type="match status" value="1"/>
</dbReference>
<dbReference type="PANTHER" id="PTHR30195">
    <property type="entry name" value="TYPE I SITE-SPECIFIC DEOXYRIBONUCLEASE PROTEIN SUBUNIT M AND R"/>
    <property type="match status" value="1"/>
</dbReference>
<dbReference type="Pfam" id="PF04313">
    <property type="entry name" value="HSDR_N"/>
    <property type="match status" value="1"/>
</dbReference>
<keyword id="KW-0067">ATP-binding</keyword>
<keyword id="KW-0238">DNA-binding</keyword>
<keyword id="KW-0255">Endonuclease</keyword>
<keyword id="KW-0378">Hydrolase</keyword>
<keyword id="KW-0540">Nuclease</keyword>
<keyword id="KW-0547">Nucleotide-binding</keyword>
<keyword id="KW-0680">Restriction system</keyword>
<accession>P17224</accession>
<sequence>MVDCTKPIAESNNFIILDKYNPDWKITESYQSEGDLERELIQDLVNQGYEYLPTLNNTKAMLANVREQLQNLNNVEFLEAEWRRFVETWMDKPSDGVVEKARKIHDDYVHDFVFDDGRIQNIYLLDRKNILRNKVQVIKQFEQAGTHANRYDVTILVNGLPLVQIELKKRGVAIREAFNQIHRYSKESFNSENSLFKYLQLFVISNGTDTRYFANTTKRDKNSFDFTMNWAKSDNTLIKDLKDFTATFFQKHTLLNVLVNYSVFDSSQTLLVMRPYQIAATERILWKIKSSFTSEELVKTGKRWVYLAHYRFW</sequence>
<gene>
    <name evidence="4" type="primary">prrD</name>
    <name evidence="4" type="synonym">orfD</name>
</gene>
<name>T1RP_ECOLX</name>
<comment type="function">
    <text evidence="1 2 3 6">The subtype C restriction (R) subunit of a type I restriction enzyme that recognizes 5'-CCAN(7)RTGC-3' and cleaves a random distance away. The R subunit is required for both endonuclease and ATPase activities but not for modification. Cleaves only non-methylated DNA, hemi-methylated and fully methylated DNA are not substrates. After locating a non-methylated recognition site, the enzyme complex serves as a molecular motor that translocates DNA in an ATP-dependent manner until a collision occurs that triggers cleavage (By similarity) (PubMed:12654995). The prr locus restricts phage T4 mutants lacking polynucleotide kinase or RNA ligase; T4 mutants lacking these genes manifest a T4-induced anticodon nuclease (ACNase). This is a putative 'masking-agent' for the ACNase encoded by prrC. It is thought that Stp and other T4-encoded ACNase factors counteract the masking agents, thus activating the latent ACNase (Probable) (PubMed:1691706).</text>
</comment>
<comment type="catalytic activity">
    <reaction evidence="1">
        <text>Endonucleolytic cleavage of DNA to give random double-stranded fragments with terminal 5'-phosphates, ATP is simultaneously hydrolyzed.</text>
        <dbReference type="EC" id="3.1.21.3"/>
    </reaction>
</comment>
<comment type="subunit">
    <text evidence="1">The type I restriction/modification system is composed of three polypeptides R, M and S; the restriction enzyme has stoichiometry R(2)M(2)S(1) while the methyltransferase is M(2)S(1).</text>
</comment>
<comment type="disruption phenotype">
    <text evidence="2">Manifests the latent anticodon nuclease (prrC, ACNase).</text>
</comment>
<comment type="similarity">
    <text evidence="5">Belongs to the HsdR family.</text>
</comment>
<evidence type="ECO:0000250" key="1">
    <source>
        <dbReference type="UniProtKB" id="P08956"/>
    </source>
</evidence>
<evidence type="ECO:0000269" key="2">
    <source>
    </source>
</evidence>
<evidence type="ECO:0000303" key="3">
    <source>
    </source>
</evidence>
<evidence type="ECO:0000303" key="4">
    <source>
    </source>
</evidence>
<evidence type="ECO:0000305" key="5"/>
<evidence type="ECO:0000305" key="6">
    <source>
    </source>
</evidence>
<protein>
    <recommendedName>
        <fullName evidence="3">Type I restriction enzyme EcoprrI endonuclease subunit</fullName>
        <shortName evidence="3">EcoprrI</shortName>
        <shortName>R protein</shortName>
        <ecNumber evidence="1">3.1.21.3</ecNumber>
    </recommendedName>
</protein>